<organism>
    <name type="scientific">Phodopus roborovskii</name>
    <name type="common">Roborovski's desert hamster</name>
    <name type="synonym">Cricetulus roborovskii</name>
    <dbReference type="NCBI Taxonomy" id="109678"/>
    <lineage>
        <taxon>Eukaryota</taxon>
        <taxon>Metazoa</taxon>
        <taxon>Chordata</taxon>
        <taxon>Craniata</taxon>
        <taxon>Vertebrata</taxon>
        <taxon>Euteleostomi</taxon>
        <taxon>Mammalia</taxon>
        <taxon>Eutheria</taxon>
        <taxon>Euarchontoglires</taxon>
        <taxon>Glires</taxon>
        <taxon>Rodentia</taxon>
        <taxon>Myomorpha</taxon>
        <taxon>Muroidea</taxon>
        <taxon>Cricetidae</taxon>
        <taxon>Cricetinae</taxon>
        <taxon>Phodopus</taxon>
    </lineage>
</organism>
<reference key="1">
    <citation type="submission" date="2004-04" db="EMBL/GenBank/DDBJ databases">
        <title>Expression of c-FOS in dwarf desert hamster Phodopus roborovskii (Satunin 1903).</title>
        <authorList>
            <person name="Weiler E."/>
        </authorList>
    </citation>
    <scope>NUCLEOTIDE SEQUENCE [GENOMIC DNA]</scope>
</reference>
<proteinExistence type="inferred from homology"/>
<keyword id="KW-0963">Cytoplasm</keyword>
<keyword id="KW-0238">DNA-binding</keyword>
<keyword id="KW-0256">Endoplasmic reticulum</keyword>
<keyword id="KW-1017">Isopeptide bond</keyword>
<keyword id="KW-0539">Nucleus</keyword>
<keyword id="KW-0597">Phosphoprotein</keyword>
<keyword id="KW-0656">Proto-oncogene</keyword>
<keyword id="KW-0832">Ubl conjugation</keyword>
<dbReference type="EMBL" id="AY593962">
    <property type="protein sequence ID" value="AAU00057.1"/>
    <property type="molecule type" value="Genomic_DNA"/>
</dbReference>
<dbReference type="SMR" id="Q56TN0"/>
<dbReference type="OrthoDB" id="5866312at2759"/>
<dbReference type="GO" id="GO:0005829">
    <property type="term" value="C:cytosol"/>
    <property type="evidence" value="ECO:0007669"/>
    <property type="project" value="UniProtKB-SubCell"/>
</dbReference>
<dbReference type="GO" id="GO:0005783">
    <property type="term" value="C:endoplasmic reticulum"/>
    <property type="evidence" value="ECO:0007669"/>
    <property type="project" value="UniProtKB-SubCell"/>
</dbReference>
<dbReference type="GO" id="GO:0005634">
    <property type="term" value="C:nucleus"/>
    <property type="evidence" value="ECO:0007669"/>
    <property type="project" value="UniProtKB-SubCell"/>
</dbReference>
<dbReference type="GO" id="GO:0000981">
    <property type="term" value="F:DNA-binding transcription factor activity, RNA polymerase II-specific"/>
    <property type="evidence" value="ECO:0007669"/>
    <property type="project" value="TreeGrafter"/>
</dbReference>
<dbReference type="GO" id="GO:0000978">
    <property type="term" value="F:RNA polymerase II cis-regulatory region sequence-specific DNA binding"/>
    <property type="evidence" value="ECO:0007669"/>
    <property type="project" value="TreeGrafter"/>
</dbReference>
<dbReference type="CDD" id="cd14721">
    <property type="entry name" value="bZIP_Fos"/>
    <property type="match status" value="1"/>
</dbReference>
<dbReference type="FunFam" id="1.20.5.170:FF:000006">
    <property type="entry name" value="fos-related antigen 2 isoform X1"/>
    <property type="match status" value="1"/>
</dbReference>
<dbReference type="Gene3D" id="1.20.5.170">
    <property type="match status" value="1"/>
</dbReference>
<dbReference type="InterPro" id="IPR000837">
    <property type="entry name" value="AP-1"/>
</dbReference>
<dbReference type="InterPro" id="IPR004827">
    <property type="entry name" value="bZIP"/>
</dbReference>
<dbReference type="InterPro" id="IPR046347">
    <property type="entry name" value="bZIP_sf"/>
</dbReference>
<dbReference type="PANTHER" id="PTHR23351">
    <property type="entry name" value="FOS TRANSCRIPTION FACTOR-RELATED"/>
    <property type="match status" value="1"/>
</dbReference>
<dbReference type="PANTHER" id="PTHR23351:SF4">
    <property type="entry name" value="PROTEIN C-FOS"/>
    <property type="match status" value="1"/>
</dbReference>
<dbReference type="Pfam" id="PF00170">
    <property type="entry name" value="bZIP_1"/>
    <property type="match status" value="1"/>
</dbReference>
<dbReference type="PRINTS" id="PR00042">
    <property type="entry name" value="LEUZIPPRFOS"/>
</dbReference>
<dbReference type="SMART" id="SM00338">
    <property type="entry name" value="BRLZ"/>
    <property type="match status" value="1"/>
</dbReference>
<dbReference type="SUPFAM" id="SSF57959">
    <property type="entry name" value="Leucine zipper domain"/>
    <property type="match status" value="1"/>
</dbReference>
<dbReference type="PROSITE" id="PS50217">
    <property type="entry name" value="BZIP"/>
    <property type="match status" value="1"/>
</dbReference>
<dbReference type="PROSITE" id="PS00036">
    <property type="entry name" value="BZIP_BASIC"/>
    <property type="match status" value="1"/>
</dbReference>
<evidence type="ECO:0000250" key="1"/>
<evidence type="ECO:0000250" key="2">
    <source>
        <dbReference type="UniProtKB" id="P01100"/>
    </source>
</evidence>
<evidence type="ECO:0000250" key="3">
    <source>
        <dbReference type="UniProtKB" id="P01101"/>
    </source>
</evidence>
<evidence type="ECO:0000250" key="4">
    <source>
        <dbReference type="UniProtKB" id="P12841"/>
    </source>
</evidence>
<evidence type="ECO:0000255" key="5">
    <source>
        <dbReference type="PROSITE-ProRule" id="PRU00978"/>
    </source>
</evidence>
<evidence type="ECO:0000256" key="6">
    <source>
        <dbReference type="SAM" id="MobiDB-lite"/>
    </source>
</evidence>
<evidence type="ECO:0000305" key="7"/>
<comment type="function">
    <text evidence="1">Nuclear phosphoprotein which forms a tight but non-covalently linked complex with the JUN/AP-1 transcription factor. On TGF-beta activation, forms a multimeric SMAD3/SMAD4/JUN/FOS complex, at the AP1/SMAD-binding site to regulate TGF-beta-mediated signaling. Has a critical function in regulating the development of cells destined to form and maintain the skeleton. It is thought to have an important role in signal transduction, cell proliferation and differentiation (By similarity). In growing cells, activates phospholipid synthesis, possibly by activating CDS1 and PI4K2A. This activity requires Tyr-dephosphorylation and association with the endoplasmic reticulum (By similarity).</text>
</comment>
<comment type="subunit">
    <text evidence="2 3 4">Heterodimer; with JUN (By similarity). Component of the SMAD3/SMAD4/JUN/FOS complex required for synergistic TGF-beta-mediated transcription at the AP1-binding site (By similarity). Interacts with SMAD3; the interaction is weak even on TGF-beta activation (By similarity). Interacts with MAFB (By similarity). Interacts with TSC22D3 (via N-terminus); this interaction inhibits the binding of active AP1 to its target DNA (By similarity). Interacts with CDS1 and PI4K2A (By similarity). Interacts (via bZIP domain and leucine-zipper region) with the multiprotein chromatin-remodeling complexes SWI/SNF: SWI/SNF-A (BAF) subunits SMARCB1, SMARCC2 and SMARCD1 (By similarity). Interacts (via bZIP domain and leucine-zipper region) with ARID1A (By similarity).</text>
</comment>
<comment type="subcellular location">
    <subcellularLocation>
        <location evidence="5">Nucleus</location>
    </subcellularLocation>
    <subcellularLocation>
        <location evidence="1">Endoplasmic reticulum</location>
    </subcellularLocation>
    <subcellularLocation>
        <location evidence="1">Cytoplasm</location>
        <location evidence="1">Cytosol</location>
    </subcellularLocation>
    <text evidence="1">In quiescent cells, present in very small amounts in the cytosol. Following induction of cell growth, first localizes to the endoplasmic reticulum and only later to the nucleus. Localization at the endoplasmic reticulum requires dephosphorylation at Tyr-10 and Tyr-30 (By similarity).</text>
</comment>
<comment type="PTM">
    <text evidence="1">Phosphorylated in the C-terminal upon stimulation by nerve growth factor (NGF) and epidermal growth factor (EGF). Phosphorylated, in vitro, by MAPK and RSK1. Phosphorylation on both Ser-363 and Ser-375 by MAPK1/2 and RSK1/2 leads to protein stabilization with phosphorylation on Ser-375 being the major site for protein stabilization on NGF stimulation. Phosphorylation on Ser-363 and Ser-375 primes further phosphorylations on Thr-326 and Thr-332 through promoting docking of MAPK to the DEF domain. Phosphorylation on Thr-232, induced by HA-RAS, activates the transcriptional activity and antagonizes sumoylation. Phosphorylation on Ser-363 by RSK2 in osteoblasts contributes to osteoblast transformation (By similarity).</text>
</comment>
<comment type="PTM">
    <text evidence="1">Constitutively sumoylated with SUMO1, SUMO2 and SUMO3. Desumoylated by SENP2. Sumoylation requires heterodimerization with JUN and is enhanced by mitogen stimulation. Sumoylation inhibits the AP-1 transcriptional activity and is, itself, inhibited by Ras-activated phosphorylation on Thr-232 (By similarity).</text>
</comment>
<comment type="PTM">
    <text evidence="1">In quiescent cells, the small amount of FOS present is phosphorylated at Tyr-10 and Tyr-30 by SRC. This Tyr-phosphorylated form is cytosolic. In growing cells, dephosphorylated by PTPN2. Dephosphorylation leads to the association with endoplasmic reticulum membranes and activation of phospholipid synthesis (By similarity).</text>
</comment>
<comment type="similarity">
    <text evidence="7">Belongs to the bZIP family. Fos subfamily.</text>
</comment>
<name>FOS_PHORO</name>
<feature type="chain" id="PRO_0000254958" description="Protein c-Fos">
    <location>
        <begin position="1"/>
        <end position="381"/>
    </location>
</feature>
<feature type="domain" description="bZIP" evidence="5">
    <location>
        <begin position="137"/>
        <end position="200"/>
    </location>
</feature>
<feature type="region of interest" description="Disordered" evidence="6">
    <location>
        <begin position="1"/>
        <end position="22"/>
    </location>
</feature>
<feature type="region of interest" description="Disordered" evidence="6">
    <location>
        <begin position="118"/>
        <end position="139"/>
    </location>
</feature>
<feature type="region of interest" description="Basic motif; required for the activation of phospholipid synthesis, but not for CDS1-binding" evidence="5">
    <location>
        <begin position="139"/>
        <end position="159"/>
    </location>
</feature>
<feature type="region of interest" description="Leucine-zipper" evidence="5">
    <location>
        <begin position="165"/>
        <end position="193"/>
    </location>
</feature>
<feature type="region of interest" description="Disordered" evidence="6">
    <location>
        <begin position="355"/>
        <end position="381"/>
    </location>
</feature>
<feature type="compositionally biased region" description="Polar residues" evidence="6">
    <location>
        <begin position="1"/>
        <end position="11"/>
    </location>
</feature>
<feature type="compositionally biased region" description="Low complexity" evidence="6">
    <location>
        <begin position="12"/>
        <end position="22"/>
    </location>
</feature>
<feature type="compositionally biased region" description="Low complexity" evidence="6">
    <location>
        <begin position="363"/>
        <end position="375"/>
    </location>
</feature>
<feature type="modified residue" description="Phosphotyrosine; by SRC" evidence="2">
    <location>
        <position position="10"/>
    </location>
</feature>
<feature type="modified residue" description="Phosphotyrosine; by SRC" evidence="2">
    <location>
        <position position="30"/>
    </location>
</feature>
<feature type="modified residue" description="Phosphothreonine" evidence="3">
    <location>
        <position position="232"/>
    </location>
</feature>
<feature type="modified residue" description="Phosphothreonine; by MAPK1 and MAPK3" evidence="2">
    <location>
        <position position="326"/>
    </location>
</feature>
<feature type="modified residue" description="Phosphothreonine; by MAPK1 and MAPK3" evidence="2">
    <location>
        <position position="332"/>
    </location>
</feature>
<feature type="modified residue" description="Phosphoserine; by MAPK1, MAPK3 and RPS6KA3" evidence="2">
    <location>
        <position position="363"/>
    </location>
</feature>
<feature type="modified residue" description="Phosphoserine; by MAPK1 and MAPK3" evidence="2">
    <location>
        <position position="375"/>
    </location>
</feature>
<feature type="cross-link" description="Glycyl lysine isopeptide (Lys-Gly) (interchain with G-Cter in SUMO2)" evidence="2">
    <location>
        <position position="113"/>
    </location>
</feature>
<feature type="cross-link" description="Glycyl lysine isopeptide (Lys-Gly) (interchain with G-Cter in SUMO2)" evidence="2">
    <location>
        <position position="128"/>
    </location>
</feature>
<feature type="cross-link" description="Glycyl lysine isopeptide (Lys-Gly) (interchain with G-Cter in SUMO); alternate" evidence="1">
    <location>
        <position position="265"/>
    </location>
</feature>
<feature type="cross-link" description="Glycyl lysine isopeptide (Lys-Gly) (interchain with G-Cter in SUMO2); alternate" evidence="2">
    <location>
        <position position="265"/>
    </location>
</feature>
<gene>
    <name type="primary">FOS</name>
</gene>
<protein>
    <recommendedName>
        <fullName evidence="7">Protein c-Fos</fullName>
    </recommendedName>
    <alternativeName>
        <fullName>Cellular oncogene fos</fullName>
    </alternativeName>
    <alternativeName>
        <fullName evidence="7">Transcription factor AP-1 subunit c-Fos</fullName>
    </alternativeName>
</protein>
<sequence>MMFSGFNTDYEASSSRCSSASPAGDSLSYYHSPADSFSSMGSPVNAQDFCADLSVSSANFIPTVTAISTSPDLQWLVQPTLVSSVAPSQTRAPHPYGVPTPSTGAYSRAGMVKTVSGGRAQSIGRRGKVEQLSPEEEEKRRIRRERNKMAAAKCRNRRRELTDTLQAETDQLEDEKSALQTEIANLLKEKEKLEFILAAHRPACKIPDDLGFPEDMSVASLDLTGGLPEAATPESEEAFSLPLLNEPEPKTSLESVKSISSMELKAEPFDDFLFSASSRPSGSETTARSVPDMDLSGSFYAADWEPLHSSSLGMGPMATELEPLCTPVVTCTPSCTTYTSSFVFTYPETDSFPSCAAAHRKGSSSNEPSSDSLSSPTLLAL</sequence>
<accession>Q56TN0</accession>